<protein>
    <recommendedName>
        <fullName evidence="1">Small ribosomal subunit protein uS10z/uS10x</fullName>
    </recommendedName>
    <alternativeName>
        <fullName>40S ribosomal protein S20-1</fullName>
    </alternativeName>
</protein>
<gene>
    <name type="primary">RPS20A</name>
    <name type="ordered locus">At3g45030</name>
    <name type="ORF">F14D17_100</name>
</gene>
<gene>
    <name type="primary">RPS20C</name>
    <name type="ordered locus">At5g62300</name>
    <name type="ORF">MMI9.13</name>
    <name type="ORF">MMI9_120</name>
</gene>
<proteinExistence type="evidence at transcript level"/>
<comment type="similarity">
    <text evidence="2">Belongs to the universal ribosomal protein uS10 family.</text>
</comment>
<comment type="sequence caution" evidence="2">
    <conflict type="erroneous initiation">
        <sequence resource="EMBL-CDS" id="BAA97194"/>
    </conflict>
</comment>
<comment type="sequence caution" evidence="2">
    <conflict type="erroneous initiation">
        <sequence resource="EMBL-CDS" id="CAB89318"/>
    </conflict>
</comment>
<accession>P49200</accession>
<accession>Q42168</accession>
<accession>Q9FPI1</accession>
<accession>Q9LDG8</accession>
<dbReference type="EMBL" id="AL353992">
    <property type="protein sequence ID" value="CAB89318.1"/>
    <property type="status" value="ALT_INIT"/>
    <property type="molecule type" value="Genomic_DNA"/>
</dbReference>
<dbReference type="EMBL" id="AB019235">
    <property type="protein sequence ID" value="BAA97194.1"/>
    <property type="status" value="ALT_INIT"/>
    <property type="molecule type" value="Genomic_DNA"/>
</dbReference>
<dbReference type="EMBL" id="CP002686">
    <property type="protein sequence ID" value="AEE77981.1"/>
    <property type="molecule type" value="Genomic_DNA"/>
</dbReference>
<dbReference type="EMBL" id="CP002688">
    <property type="protein sequence ID" value="AED97593.1"/>
    <property type="molecule type" value="Genomic_DNA"/>
</dbReference>
<dbReference type="EMBL" id="CP002688">
    <property type="protein sequence ID" value="AED97594.1"/>
    <property type="molecule type" value="Genomic_DNA"/>
</dbReference>
<dbReference type="EMBL" id="AF325017">
    <property type="protein sequence ID" value="AAG40369.1"/>
    <property type="molecule type" value="mRNA"/>
</dbReference>
<dbReference type="EMBL" id="AF370460">
    <property type="protein sequence ID" value="AAK43837.1"/>
    <property type="molecule type" value="mRNA"/>
</dbReference>
<dbReference type="EMBL" id="AY096646">
    <property type="protein sequence ID" value="AAM20143.1"/>
    <property type="molecule type" value="mRNA"/>
</dbReference>
<dbReference type="EMBL" id="AY114024">
    <property type="protein sequence ID" value="AAM45072.1"/>
    <property type="molecule type" value="mRNA"/>
</dbReference>
<dbReference type="EMBL" id="AY085673">
    <property type="protein sequence ID" value="AAM62892.1"/>
    <property type="molecule type" value="mRNA"/>
</dbReference>
<dbReference type="EMBL" id="Z27060">
    <property type="protein sequence ID" value="CAA81578.1"/>
    <property type="molecule type" value="mRNA"/>
</dbReference>
<dbReference type="EMBL" id="Z26188">
    <property type="protein sequence ID" value="CAA81186.1"/>
    <property type="molecule type" value="mRNA"/>
</dbReference>
<dbReference type="EMBL" id="Z26558">
    <property type="protein sequence ID" value="CAA81329.1"/>
    <property type="molecule type" value="mRNA"/>
</dbReference>
<dbReference type="RefSeq" id="NP_001078781.1">
    <property type="nucleotide sequence ID" value="NM_001085312.1"/>
</dbReference>
<dbReference type="RefSeq" id="NP_190089.2">
    <property type="nucleotide sequence ID" value="NM_114372.6"/>
</dbReference>
<dbReference type="RefSeq" id="NP_201036.1">
    <property type="nucleotide sequence ID" value="NM_125624.4"/>
</dbReference>
<dbReference type="SMR" id="P49200"/>
<dbReference type="BioGRID" id="21595">
    <property type="interactions" value="13"/>
</dbReference>
<dbReference type="BioGRID" id="8958">
    <property type="interactions" value="10"/>
</dbReference>
<dbReference type="FunCoup" id="P49200">
    <property type="interactions" value="2840"/>
</dbReference>
<dbReference type="STRING" id="3702.P49200"/>
<dbReference type="MetOSite" id="P49200"/>
<dbReference type="PaxDb" id="3702-AT3G45030.1"/>
<dbReference type="ProteomicsDB" id="237027"/>
<dbReference type="EnsemblPlants" id="AT3G45030.1">
    <property type="protein sequence ID" value="AT3G45030.1"/>
    <property type="gene ID" value="AT3G45030"/>
</dbReference>
<dbReference type="EnsemblPlants" id="AT5G62300.1">
    <property type="protein sequence ID" value="AT5G62300.1"/>
    <property type="gene ID" value="AT5G62300"/>
</dbReference>
<dbReference type="EnsemblPlants" id="AT5G62300.2">
    <property type="protein sequence ID" value="AT5G62300.2"/>
    <property type="gene ID" value="AT5G62300"/>
</dbReference>
<dbReference type="GeneID" id="823638"/>
<dbReference type="GeneID" id="836351"/>
<dbReference type="Gramene" id="AT3G45030.1">
    <property type="protein sequence ID" value="AT3G45030.1"/>
    <property type="gene ID" value="AT3G45030"/>
</dbReference>
<dbReference type="Gramene" id="AT5G62300.1">
    <property type="protein sequence ID" value="AT5G62300.1"/>
    <property type="gene ID" value="AT5G62300"/>
</dbReference>
<dbReference type="Gramene" id="AT5G62300.2">
    <property type="protein sequence ID" value="AT5G62300.2"/>
    <property type="gene ID" value="AT5G62300"/>
</dbReference>
<dbReference type="KEGG" id="ath:AT3G45030"/>
<dbReference type="KEGG" id="ath:AT5G62300"/>
<dbReference type="Araport" id="AT3G45030"/>
<dbReference type="Araport" id="AT5G62300"/>
<dbReference type="TAIR" id="AT3G45030"/>
<dbReference type="TAIR" id="AT5G62300"/>
<dbReference type="eggNOG" id="KOG0900">
    <property type="taxonomic scope" value="Eukaryota"/>
</dbReference>
<dbReference type="HOGENOM" id="CLU_122625_0_0_1"/>
<dbReference type="InParanoid" id="P49200"/>
<dbReference type="OMA" id="IHKRVIH"/>
<dbReference type="OrthoDB" id="588367at2759"/>
<dbReference type="PhylomeDB" id="P49200"/>
<dbReference type="CD-CODE" id="4299E36E">
    <property type="entry name" value="Nucleolus"/>
</dbReference>
<dbReference type="PRO" id="PR:P49200"/>
<dbReference type="Proteomes" id="UP000006548">
    <property type="component" value="Chromosome 3"/>
</dbReference>
<dbReference type="Proteomes" id="UP000006548">
    <property type="component" value="Chromosome 5"/>
</dbReference>
<dbReference type="ExpressionAtlas" id="P49200">
    <property type="expression patterns" value="baseline and differential"/>
</dbReference>
<dbReference type="GO" id="GO:0005829">
    <property type="term" value="C:cytosol"/>
    <property type="evidence" value="ECO:0007005"/>
    <property type="project" value="TAIR"/>
</dbReference>
<dbReference type="GO" id="GO:0022627">
    <property type="term" value="C:cytosolic small ribosomal subunit"/>
    <property type="evidence" value="ECO:0007005"/>
    <property type="project" value="TAIR"/>
</dbReference>
<dbReference type="GO" id="GO:0009505">
    <property type="term" value="C:plant-type cell wall"/>
    <property type="evidence" value="ECO:0007005"/>
    <property type="project" value="TAIR"/>
</dbReference>
<dbReference type="GO" id="GO:0009536">
    <property type="term" value="C:plastid"/>
    <property type="evidence" value="ECO:0007005"/>
    <property type="project" value="TAIR"/>
</dbReference>
<dbReference type="GO" id="GO:0003729">
    <property type="term" value="F:mRNA binding"/>
    <property type="evidence" value="ECO:0000314"/>
    <property type="project" value="TAIR"/>
</dbReference>
<dbReference type="GO" id="GO:0003735">
    <property type="term" value="F:structural constituent of ribosome"/>
    <property type="evidence" value="ECO:0000314"/>
    <property type="project" value="CAFA"/>
</dbReference>
<dbReference type="GO" id="GO:0006412">
    <property type="term" value="P:translation"/>
    <property type="evidence" value="ECO:0007669"/>
    <property type="project" value="InterPro"/>
</dbReference>
<dbReference type="FunFam" id="3.30.70.600:FF:000002">
    <property type="entry name" value="40S ribosomal protein S20"/>
    <property type="match status" value="1"/>
</dbReference>
<dbReference type="Gene3D" id="3.30.70.600">
    <property type="entry name" value="Ribosomal protein S10 domain"/>
    <property type="match status" value="1"/>
</dbReference>
<dbReference type="HAMAP" id="MF_00508">
    <property type="entry name" value="Ribosomal_uS10"/>
    <property type="match status" value="1"/>
</dbReference>
<dbReference type="InterPro" id="IPR001848">
    <property type="entry name" value="Ribosomal_uS10"/>
</dbReference>
<dbReference type="InterPro" id="IPR018268">
    <property type="entry name" value="Ribosomal_uS10_CS"/>
</dbReference>
<dbReference type="InterPro" id="IPR027486">
    <property type="entry name" value="Ribosomal_uS10_dom"/>
</dbReference>
<dbReference type="InterPro" id="IPR036838">
    <property type="entry name" value="Ribosomal_uS10_dom_sf"/>
</dbReference>
<dbReference type="InterPro" id="IPR005729">
    <property type="entry name" value="Ribosomal_uS10_euk/arc"/>
</dbReference>
<dbReference type="NCBIfam" id="TIGR01046">
    <property type="entry name" value="uS10_euk_arch"/>
    <property type="match status" value="1"/>
</dbReference>
<dbReference type="PANTHER" id="PTHR11700">
    <property type="entry name" value="30S RIBOSOMAL PROTEIN S10 FAMILY MEMBER"/>
    <property type="match status" value="1"/>
</dbReference>
<dbReference type="Pfam" id="PF00338">
    <property type="entry name" value="Ribosomal_S10"/>
    <property type="match status" value="1"/>
</dbReference>
<dbReference type="PRINTS" id="PR00971">
    <property type="entry name" value="RIBOSOMALS10"/>
</dbReference>
<dbReference type="SMART" id="SM01403">
    <property type="entry name" value="Ribosomal_S10"/>
    <property type="match status" value="1"/>
</dbReference>
<dbReference type="SUPFAM" id="SSF54999">
    <property type="entry name" value="Ribosomal protein S10"/>
    <property type="match status" value="1"/>
</dbReference>
<dbReference type="PROSITE" id="PS00361">
    <property type="entry name" value="RIBOSOMAL_S10"/>
    <property type="match status" value="1"/>
</dbReference>
<keyword id="KW-1185">Reference proteome</keyword>
<keyword id="KW-0687">Ribonucleoprotein</keyword>
<keyword id="KW-0689">Ribosomal protein</keyword>
<feature type="chain" id="PRO_0000146688" description="Small ribosomal subunit protein uS10z/uS10x">
    <location>
        <begin position="1"/>
        <end position="124"/>
    </location>
</feature>
<feature type="sequence conflict" description="In Ref. 6; CAA81578." evidence="2" ref="6">
    <original>I</original>
    <variation>L</variation>
    <location>
        <position position="25"/>
    </location>
</feature>
<feature type="sequence conflict" description="In Ref. 6; CAA81329." evidence="2" ref="6">
    <original>S</original>
    <variation>P</variation>
    <location>
        <position position="31"/>
    </location>
</feature>
<feature type="sequence conflict" description="In Ref. 6; CAA81186." evidence="2" ref="6">
    <original>K</original>
    <variation>N</variation>
    <location>
        <position position="35"/>
    </location>
</feature>
<feature type="sequence conflict" description="In Ref. 6; CAA81578." evidence="2" ref="6">
    <original>N</original>
    <variation>I</variation>
    <location>
        <position position="36"/>
    </location>
</feature>
<feature type="sequence conflict" description="In Ref. 6; CAA81578." evidence="2" ref="6">
    <original>V</original>
    <variation>A</variation>
    <location>
        <position position="45"/>
    </location>
</feature>
<feature type="sequence conflict" description="In Ref. 6; CAA81578." evidence="2" ref="6">
    <original>K</original>
    <variation>M</variation>
    <location>
        <position position="56"/>
    </location>
</feature>
<feature type="sequence conflict" description="In Ref. 6; CAA81578." evidence="2" ref="6">
    <original>E</original>
    <variation>D</variation>
    <location>
        <position position="77"/>
    </location>
</feature>
<feature type="sequence conflict" description="In Ref. 6; CAA81186." evidence="2" ref="6">
    <original>FSSPDVVKQITS</original>
    <variation>SALLMWSTRSV</variation>
    <location>
        <begin position="97"/>
        <end position="108"/>
    </location>
</feature>
<feature type="sequence conflict" description="In Ref. 6; CAA81578." evidence="2" ref="6">
    <original>F</original>
    <variation>H</variation>
    <location>
        <position position="97"/>
    </location>
</feature>
<feature type="sequence conflict" description="In Ref. 6; CAA81578." evidence="2" ref="6">
    <original>S</original>
    <variation>P</variation>
    <location>
        <position position="108"/>
    </location>
</feature>
<feature type="sequence conflict" description="In Ref. 6; CAA81578." evidence="2" ref="6">
    <original>S</original>
    <variation>A</variation>
    <location>
        <position position="124"/>
    </location>
</feature>
<organism>
    <name type="scientific">Arabidopsis thaliana</name>
    <name type="common">Mouse-ear cress</name>
    <dbReference type="NCBI Taxonomy" id="3702"/>
    <lineage>
        <taxon>Eukaryota</taxon>
        <taxon>Viridiplantae</taxon>
        <taxon>Streptophyta</taxon>
        <taxon>Embryophyta</taxon>
        <taxon>Tracheophyta</taxon>
        <taxon>Spermatophyta</taxon>
        <taxon>Magnoliopsida</taxon>
        <taxon>eudicotyledons</taxon>
        <taxon>Gunneridae</taxon>
        <taxon>Pentapetalae</taxon>
        <taxon>rosids</taxon>
        <taxon>malvids</taxon>
        <taxon>Brassicales</taxon>
        <taxon>Brassicaceae</taxon>
        <taxon>Camelineae</taxon>
        <taxon>Arabidopsis</taxon>
    </lineage>
</organism>
<reference key="1">
    <citation type="journal article" date="2000" name="Nature">
        <title>Sequence and analysis of chromosome 3 of the plant Arabidopsis thaliana.</title>
        <authorList>
            <person name="Salanoubat M."/>
            <person name="Lemcke K."/>
            <person name="Rieger M."/>
            <person name="Ansorge W."/>
            <person name="Unseld M."/>
            <person name="Fartmann B."/>
            <person name="Valle G."/>
            <person name="Bloecker H."/>
            <person name="Perez-Alonso M."/>
            <person name="Obermaier B."/>
            <person name="Delseny M."/>
            <person name="Boutry M."/>
            <person name="Grivell L.A."/>
            <person name="Mache R."/>
            <person name="Puigdomenech P."/>
            <person name="De Simone V."/>
            <person name="Choisne N."/>
            <person name="Artiguenave F."/>
            <person name="Robert C."/>
            <person name="Brottier P."/>
            <person name="Wincker P."/>
            <person name="Cattolico L."/>
            <person name="Weissenbach J."/>
            <person name="Saurin W."/>
            <person name="Quetier F."/>
            <person name="Schaefer M."/>
            <person name="Mueller-Auer S."/>
            <person name="Gabel C."/>
            <person name="Fuchs M."/>
            <person name="Benes V."/>
            <person name="Wurmbach E."/>
            <person name="Drzonek H."/>
            <person name="Erfle H."/>
            <person name="Jordan N."/>
            <person name="Bangert S."/>
            <person name="Wiedelmann R."/>
            <person name="Kranz H."/>
            <person name="Voss H."/>
            <person name="Holland R."/>
            <person name="Brandt P."/>
            <person name="Nyakatura G."/>
            <person name="Vezzi A."/>
            <person name="D'Angelo M."/>
            <person name="Pallavicini A."/>
            <person name="Toppo S."/>
            <person name="Simionati B."/>
            <person name="Conrad A."/>
            <person name="Hornischer K."/>
            <person name="Kauer G."/>
            <person name="Loehnert T.-H."/>
            <person name="Nordsiek G."/>
            <person name="Reichelt J."/>
            <person name="Scharfe M."/>
            <person name="Schoen O."/>
            <person name="Bargues M."/>
            <person name="Terol J."/>
            <person name="Climent J."/>
            <person name="Navarro P."/>
            <person name="Collado C."/>
            <person name="Perez-Perez A."/>
            <person name="Ottenwaelder B."/>
            <person name="Duchemin D."/>
            <person name="Cooke R."/>
            <person name="Laudie M."/>
            <person name="Berger-Llauro C."/>
            <person name="Purnelle B."/>
            <person name="Masuy D."/>
            <person name="de Haan M."/>
            <person name="Maarse A.C."/>
            <person name="Alcaraz J.-P."/>
            <person name="Cottet A."/>
            <person name="Casacuberta E."/>
            <person name="Monfort A."/>
            <person name="Argiriou A."/>
            <person name="Flores M."/>
            <person name="Liguori R."/>
            <person name="Vitale D."/>
            <person name="Mannhaupt G."/>
            <person name="Haase D."/>
            <person name="Schoof H."/>
            <person name="Rudd S."/>
            <person name="Zaccaria P."/>
            <person name="Mewes H.-W."/>
            <person name="Mayer K.F.X."/>
            <person name="Kaul S."/>
            <person name="Town C.D."/>
            <person name="Koo H.L."/>
            <person name="Tallon L.J."/>
            <person name="Jenkins J."/>
            <person name="Rooney T."/>
            <person name="Rizzo M."/>
            <person name="Walts A."/>
            <person name="Utterback T."/>
            <person name="Fujii C.Y."/>
            <person name="Shea T.P."/>
            <person name="Creasy T.H."/>
            <person name="Haas B."/>
            <person name="Maiti R."/>
            <person name="Wu D."/>
            <person name="Peterson J."/>
            <person name="Van Aken S."/>
            <person name="Pai G."/>
            <person name="Militscher J."/>
            <person name="Sellers P."/>
            <person name="Gill J.E."/>
            <person name="Feldblyum T.V."/>
            <person name="Preuss D."/>
            <person name="Lin X."/>
            <person name="Nierman W.C."/>
            <person name="Salzberg S.L."/>
            <person name="White O."/>
            <person name="Venter J.C."/>
            <person name="Fraser C.M."/>
            <person name="Kaneko T."/>
            <person name="Nakamura Y."/>
            <person name="Sato S."/>
            <person name="Kato T."/>
            <person name="Asamizu E."/>
            <person name="Sasamoto S."/>
            <person name="Kimura T."/>
            <person name="Idesawa K."/>
            <person name="Kawashima K."/>
            <person name="Kishida Y."/>
            <person name="Kiyokawa C."/>
            <person name="Kohara M."/>
            <person name="Matsumoto M."/>
            <person name="Matsuno A."/>
            <person name="Muraki A."/>
            <person name="Nakayama S."/>
            <person name="Nakazaki N."/>
            <person name="Shinpo S."/>
            <person name="Takeuchi C."/>
            <person name="Wada T."/>
            <person name="Watanabe A."/>
            <person name="Yamada M."/>
            <person name="Yasuda M."/>
            <person name="Tabata S."/>
        </authorList>
    </citation>
    <scope>NUCLEOTIDE SEQUENCE [LARGE SCALE GENOMIC DNA] (AT3G45030)</scope>
    <source>
        <strain>cv. Columbia</strain>
    </source>
</reference>
<reference key="2">
    <citation type="journal article" date="2000" name="DNA Res.">
        <title>Structural analysis of Arabidopsis thaliana chromosome 5. X. Sequence features of the regions of 3,076,755 bp covered by sixty P1 and TAC clones.</title>
        <authorList>
            <person name="Sato S."/>
            <person name="Nakamura Y."/>
            <person name="Kaneko T."/>
            <person name="Katoh T."/>
            <person name="Asamizu E."/>
            <person name="Kotani H."/>
            <person name="Tabata S."/>
        </authorList>
    </citation>
    <scope>NUCLEOTIDE SEQUENCE [LARGE SCALE GENOMIC DNA] (AT5G62300)</scope>
    <source>
        <strain>cv. Columbia</strain>
    </source>
</reference>
<reference key="3">
    <citation type="journal article" date="2017" name="Plant J.">
        <title>Araport11: a complete reannotation of the Arabidopsis thaliana reference genome.</title>
        <authorList>
            <person name="Cheng C.Y."/>
            <person name="Krishnakumar V."/>
            <person name="Chan A.P."/>
            <person name="Thibaud-Nissen F."/>
            <person name="Schobel S."/>
            <person name="Town C.D."/>
        </authorList>
    </citation>
    <scope>GENOME REANNOTATION</scope>
    <source>
        <strain>cv. Columbia</strain>
    </source>
</reference>
<reference key="4">
    <citation type="journal article" date="2003" name="Science">
        <title>Empirical analysis of transcriptional activity in the Arabidopsis genome.</title>
        <authorList>
            <person name="Yamada K."/>
            <person name="Lim J."/>
            <person name="Dale J.M."/>
            <person name="Chen H."/>
            <person name="Shinn P."/>
            <person name="Palm C.J."/>
            <person name="Southwick A.M."/>
            <person name="Wu H.C."/>
            <person name="Kim C.J."/>
            <person name="Nguyen M."/>
            <person name="Pham P.K."/>
            <person name="Cheuk R.F."/>
            <person name="Karlin-Newmann G."/>
            <person name="Liu S.X."/>
            <person name="Lam B."/>
            <person name="Sakano H."/>
            <person name="Wu T."/>
            <person name="Yu G."/>
            <person name="Miranda M."/>
            <person name="Quach H.L."/>
            <person name="Tripp M."/>
            <person name="Chang C.H."/>
            <person name="Lee J.M."/>
            <person name="Toriumi M.J."/>
            <person name="Chan M.M."/>
            <person name="Tang C.C."/>
            <person name="Onodera C.S."/>
            <person name="Deng J.M."/>
            <person name="Akiyama K."/>
            <person name="Ansari Y."/>
            <person name="Arakawa T."/>
            <person name="Banh J."/>
            <person name="Banno F."/>
            <person name="Bowser L."/>
            <person name="Brooks S.Y."/>
            <person name="Carninci P."/>
            <person name="Chao Q."/>
            <person name="Choy N."/>
            <person name="Enju A."/>
            <person name="Goldsmith A.D."/>
            <person name="Gurjal M."/>
            <person name="Hansen N.F."/>
            <person name="Hayashizaki Y."/>
            <person name="Johnson-Hopson C."/>
            <person name="Hsuan V.W."/>
            <person name="Iida K."/>
            <person name="Karnes M."/>
            <person name="Khan S."/>
            <person name="Koesema E."/>
            <person name="Ishida J."/>
            <person name="Jiang P.X."/>
            <person name="Jones T."/>
            <person name="Kawai J."/>
            <person name="Kamiya A."/>
            <person name="Meyers C."/>
            <person name="Nakajima M."/>
            <person name="Narusaka M."/>
            <person name="Seki M."/>
            <person name="Sakurai T."/>
            <person name="Satou M."/>
            <person name="Tamse R."/>
            <person name="Vaysberg M."/>
            <person name="Wallender E.K."/>
            <person name="Wong C."/>
            <person name="Yamamura Y."/>
            <person name="Yuan S."/>
            <person name="Shinozaki K."/>
            <person name="Davis R.W."/>
            <person name="Theologis A."/>
            <person name="Ecker J.R."/>
        </authorList>
    </citation>
    <scope>NUCLEOTIDE SEQUENCE [LARGE SCALE MRNA] (AT3G45030 AND AT5G62300)</scope>
    <source>
        <strain>cv. Columbia</strain>
    </source>
</reference>
<reference key="5">
    <citation type="submission" date="2002-03" db="EMBL/GenBank/DDBJ databases">
        <title>Full-length cDNA from Arabidopsis thaliana.</title>
        <authorList>
            <person name="Brover V.V."/>
            <person name="Troukhan M.E."/>
            <person name="Alexandrov N.A."/>
            <person name="Lu Y.-P."/>
            <person name="Flavell R.B."/>
            <person name="Feldmann K.A."/>
        </authorList>
    </citation>
    <scope>NUCLEOTIDE SEQUENCE [LARGE SCALE MRNA] (AT5G62300)</scope>
</reference>
<reference key="6">
    <citation type="journal article" date="1996" name="Plant J.">
        <title>Further progress towards a catalogue of all Arabidopsis genes: analysis of a set of 5000 non-redundant ESTs.</title>
        <authorList>
            <person name="Cooke R."/>
            <person name="Raynal M."/>
            <person name="Laudie M."/>
            <person name="Grellet F."/>
            <person name="Delseny M."/>
            <person name="Morris P.-C."/>
            <person name="Guerrier D."/>
            <person name="Giraudat J."/>
            <person name="Quigley F."/>
            <person name="Clabault G."/>
            <person name="Li Y.-F."/>
            <person name="Mache R."/>
            <person name="Krivitzky M."/>
            <person name="Gy I.J.-J."/>
            <person name="Kreis M."/>
            <person name="Lecharny A."/>
            <person name="Parmentier Y."/>
            <person name="Marbach J."/>
            <person name="Fleck J."/>
            <person name="Clement B."/>
            <person name="Philipps G."/>
            <person name="Herve C."/>
            <person name="Bardet C."/>
            <person name="Tremousaygue D."/>
            <person name="Lescure B."/>
            <person name="Lacomme C."/>
            <person name="Roby D."/>
            <person name="Jourjon M.-F."/>
            <person name="Chabrier P."/>
            <person name="Charpenteau J.-L."/>
            <person name="Desprez T."/>
            <person name="Amselem J."/>
            <person name="Chiapello H."/>
            <person name="Hoefte H."/>
        </authorList>
    </citation>
    <scope>NUCLEOTIDE SEQUENCE [LARGE SCALE MRNA]</scope>
    <source>
        <strain>cv. Columbia</strain>
        <tissue>Dry seed</tissue>
        <tissue>Seedling</tissue>
    </source>
</reference>
<reference key="7">
    <citation type="journal article" date="2001" name="Plant Physiol.">
        <title>The organization of cytoplasmic ribosomal protein genes in the Arabidopsis genome.</title>
        <authorList>
            <person name="Barakat A."/>
            <person name="Szick-Miranda K."/>
            <person name="Chang I.-F."/>
            <person name="Guyot R."/>
            <person name="Blanc G."/>
            <person name="Cooke R."/>
            <person name="Delseny M."/>
            <person name="Bailey-Serres J."/>
        </authorList>
    </citation>
    <scope>GENE FAMILY ORGANIZATION</scope>
    <scope>NOMENCLATURE</scope>
</reference>
<reference key="8">
    <citation type="journal article" date="2023" name="Plant Cell">
        <title>An updated nomenclature for plant ribosomal protein genes.</title>
        <authorList>
            <person name="Scarpin M.R."/>
            <person name="Busche M."/>
            <person name="Martinez R.E."/>
            <person name="Harper L.C."/>
            <person name="Reiser L."/>
            <person name="Szakonyi D."/>
            <person name="Merchante C."/>
            <person name="Lan T."/>
            <person name="Xiong W."/>
            <person name="Mo B."/>
            <person name="Tang G."/>
            <person name="Chen X."/>
            <person name="Bailey-Serres J."/>
            <person name="Browning K.S."/>
            <person name="Brunkard J.O."/>
        </authorList>
    </citation>
    <scope>NOMENCLATURE</scope>
</reference>
<name>RS201_ARATH</name>
<sequence>MATAYQPMKPGKAGLEEPLEQIHKIRITLSSKNVKNLEKVCTDLVRGAKDKRLRVKGPVRMPTKVLKITTRKAPCGEGTNTWDRFELRVHKRVIDLFSSPDVVKQITSITIEPGVEVEVTIADS</sequence>
<evidence type="ECO:0000303" key="1">
    <source>
    </source>
</evidence>
<evidence type="ECO:0000305" key="2"/>